<evidence type="ECO:0000250" key="1">
    <source>
        <dbReference type="UniProtKB" id="Q12019"/>
    </source>
</evidence>
<evidence type="ECO:0000255" key="2"/>
<evidence type="ECO:0000255" key="3">
    <source>
        <dbReference type="PROSITE-ProRule" id="PRU00136"/>
    </source>
</evidence>
<evidence type="ECO:0000255" key="4">
    <source>
        <dbReference type="PROSITE-ProRule" id="PRU00219"/>
    </source>
</evidence>
<evidence type="ECO:0000255" key="5">
    <source>
        <dbReference type="PROSITE-ProRule" id="PRU00768"/>
    </source>
</evidence>
<evidence type="ECO:0000256" key="6">
    <source>
        <dbReference type="SAM" id="MobiDB-lite"/>
    </source>
</evidence>
<evidence type="ECO:0000269" key="7">
    <source>
    </source>
</evidence>
<evidence type="ECO:0000269" key="8">
    <source>
    </source>
</evidence>
<evidence type="ECO:0000303" key="9">
    <source>
    </source>
</evidence>
<evidence type="ECO:0000303" key="10">
    <source>
    </source>
</evidence>
<evidence type="ECO:0000305" key="11"/>
<evidence type="ECO:0000312" key="12">
    <source>
        <dbReference type="Araport" id="AT1G67120"/>
    </source>
</evidence>
<evidence type="ECO:0000312" key="13">
    <source>
        <dbReference type="EMBL" id="AAD10657.1"/>
    </source>
</evidence>
<reference key="1">
    <citation type="journal article" date="2000" name="Nature">
        <title>Sequence and analysis of chromosome 1 of the plant Arabidopsis thaliana.</title>
        <authorList>
            <person name="Theologis A."/>
            <person name="Ecker J.R."/>
            <person name="Palm C.J."/>
            <person name="Federspiel N.A."/>
            <person name="Kaul S."/>
            <person name="White O."/>
            <person name="Alonso J."/>
            <person name="Altafi H."/>
            <person name="Araujo R."/>
            <person name="Bowman C.L."/>
            <person name="Brooks S.Y."/>
            <person name="Buehler E."/>
            <person name="Chan A."/>
            <person name="Chao Q."/>
            <person name="Chen H."/>
            <person name="Cheuk R.F."/>
            <person name="Chin C.W."/>
            <person name="Chung M.K."/>
            <person name="Conn L."/>
            <person name="Conway A.B."/>
            <person name="Conway A.R."/>
            <person name="Creasy T.H."/>
            <person name="Dewar K."/>
            <person name="Dunn P."/>
            <person name="Etgu P."/>
            <person name="Feldblyum T.V."/>
            <person name="Feng J.-D."/>
            <person name="Fong B."/>
            <person name="Fujii C.Y."/>
            <person name="Gill J.E."/>
            <person name="Goldsmith A.D."/>
            <person name="Haas B."/>
            <person name="Hansen N.F."/>
            <person name="Hughes B."/>
            <person name="Huizar L."/>
            <person name="Hunter J.L."/>
            <person name="Jenkins J."/>
            <person name="Johnson-Hopson C."/>
            <person name="Khan S."/>
            <person name="Khaykin E."/>
            <person name="Kim C.J."/>
            <person name="Koo H.L."/>
            <person name="Kremenetskaia I."/>
            <person name="Kurtz D.B."/>
            <person name="Kwan A."/>
            <person name="Lam B."/>
            <person name="Langin-Hooper S."/>
            <person name="Lee A."/>
            <person name="Lee J.M."/>
            <person name="Lenz C.A."/>
            <person name="Li J.H."/>
            <person name="Li Y.-P."/>
            <person name="Lin X."/>
            <person name="Liu S.X."/>
            <person name="Liu Z.A."/>
            <person name="Luros J.S."/>
            <person name="Maiti R."/>
            <person name="Marziali A."/>
            <person name="Militscher J."/>
            <person name="Miranda M."/>
            <person name="Nguyen M."/>
            <person name="Nierman W.C."/>
            <person name="Osborne B.I."/>
            <person name="Pai G."/>
            <person name="Peterson J."/>
            <person name="Pham P.K."/>
            <person name="Rizzo M."/>
            <person name="Rooney T."/>
            <person name="Rowley D."/>
            <person name="Sakano H."/>
            <person name="Salzberg S.L."/>
            <person name="Schwartz J.R."/>
            <person name="Shinn P."/>
            <person name="Southwick A.M."/>
            <person name="Sun H."/>
            <person name="Tallon L.J."/>
            <person name="Tambunga G."/>
            <person name="Toriumi M.J."/>
            <person name="Town C.D."/>
            <person name="Utterback T."/>
            <person name="Van Aken S."/>
            <person name="Vaysberg M."/>
            <person name="Vysotskaia V.S."/>
            <person name="Walker M."/>
            <person name="Wu D."/>
            <person name="Yu G."/>
            <person name="Fraser C.M."/>
            <person name="Venter J.C."/>
            <person name="Davis R.W."/>
        </authorList>
    </citation>
    <scope>NUCLEOTIDE SEQUENCE [LARGE SCALE GENOMIC DNA]</scope>
    <source>
        <strain>cv. Columbia</strain>
    </source>
</reference>
<reference key="2">
    <citation type="journal article" date="2017" name="Plant J.">
        <title>Araport11: a complete reannotation of the Arabidopsis thaliana reference genome.</title>
        <authorList>
            <person name="Cheng C.Y."/>
            <person name="Krishnakumar V."/>
            <person name="Chan A.P."/>
            <person name="Thibaud-Nissen F."/>
            <person name="Schobel S."/>
            <person name="Town C.D."/>
        </authorList>
    </citation>
    <scope>GENOME REANNOTATION</scope>
    <source>
        <strain>cv. Columbia</strain>
    </source>
</reference>
<reference key="3">
    <citation type="journal article" date="2008" name="J. Mol. Evol.">
        <title>Local patterns of nucleotide polymorphism are highly variable in the selfing species Arabidopsis thaliana.</title>
        <authorList>
            <person name="Moore R.C."/>
            <person name="Stevens M.H.H."/>
        </authorList>
    </citation>
    <scope>NUCLEOTIDE SEQUENCE [GENOMIC DNA] OF 706-1045 (ISOFORM 1/2)</scope>
    <source>
        <strain>cv. Bla-10</strain>
        <strain>cv. Chi-1</strain>
        <strain>cv. Co-1</strain>
        <strain>cv. Columbia</strain>
        <strain>cv. Cvi-0</strain>
        <strain>cv. Da(1)-12</strain>
        <strain>cv. Di-G</strain>
        <strain>cv. Landsberg erecta</strain>
        <strain>cv. Li-3</strain>
        <strain>cv. Mt-0</strain>
        <strain>cv. PHW-1</strain>
        <strain>cv. PHW-32</strain>
    </source>
</reference>
<reference key="4">
    <citation type="submission" date="2006-07" db="EMBL/GenBank/DDBJ databases">
        <title>Large-scale analysis of RIKEN Arabidopsis full-length (RAFL) cDNAs.</title>
        <authorList>
            <person name="Totoki Y."/>
            <person name="Seki M."/>
            <person name="Ishida J."/>
            <person name="Nakajima M."/>
            <person name="Enju A."/>
            <person name="Kamiya A."/>
            <person name="Narusaka M."/>
            <person name="Shin-i T."/>
            <person name="Nakagawa M."/>
            <person name="Sakamoto N."/>
            <person name="Oishi K."/>
            <person name="Kohara Y."/>
            <person name="Kobayashi M."/>
            <person name="Toyoda A."/>
            <person name="Sakaki Y."/>
            <person name="Sakurai T."/>
            <person name="Iida K."/>
            <person name="Akiyama K."/>
            <person name="Satou M."/>
            <person name="Toyoda T."/>
            <person name="Konagaya A."/>
            <person name="Carninci P."/>
            <person name="Kawai J."/>
            <person name="Hayashizaki Y."/>
            <person name="Shinozaki K."/>
        </authorList>
    </citation>
    <scope>NUCLEOTIDE SEQUENCE [LARGE SCALE MRNA] OF 4477-5400 (ISOFORM 1/2)</scope>
    <source>
        <strain>cv. Columbia</strain>
    </source>
</reference>
<reference key="5">
    <citation type="journal article" date="2010" name="Physiol. Mol. Biol. Plants">
        <title>The MIDASIN and NOTCHLESS genes are essential for female gametophyte development in Arabidopsis thaliana.</title>
        <authorList>
            <person name="Chantha S.-C."/>
            <person name="Gray-Mitsumune M."/>
            <person name="Houde J."/>
            <person name="Matton D.P."/>
        </authorList>
    </citation>
    <scope>FUNCTION</scope>
    <scope>DISRUPTION PHENOTYPE</scope>
    <scope>TISSUE SPECIFICITY</scope>
    <source>
        <strain>cv. Columbia</strain>
    </source>
</reference>
<reference key="6">
    <citation type="journal article" date="2016" name="Sci. Rep.">
        <title>The mutation of Glu at amino acid 3838 of AtMDN1 provokes pleiotropic developmental phenotypes in Arabidopsis.</title>
        <authorList>
            <person name="Li P.-C."/>
            <person name="Yu S.-W."/>
            <person name="Li K."/>
            <person name="Huang J.-G."/>
            <person name="Wang X.-J."/>
            <person name="Zheng C.-C."/>
        </authorList>
    </citation>
    <scope>FUNCTION</scope>
    <scope>MUTAGENESIS OF GLU-3845</scope>
    <scope>TISSUE SPECIFICITY</scope>
    <source>
        <strain>cv. Columbia</strain>
    </source>
</reference>
<proteinExistence type="evidence at protein level"/>
<dbReference type="EMBL" id="AC004146">
    <property type="protein sequence ID" value="AAD10657.1"/>
    <property type="status" value="ALT_SEQ"/>
    <property type="molecule type" value="Genomic_DNA"/>
</dbReference>
<dbReference type="EMBL" id="CP002684">
    <property type="protein sequence ID" value="AEE34598.1"/>
    <property type="molecule type" value="Genomic_DNA"/>
</dbReference>
<dbReference type="EMBL" id="CP002684">
    <property type="protein sequence ID" value="ANM60463.1"/>
    <property type="molecule type" value="Genomic_DNA"/>
</dbReference>
<dbReference type="EMBL" id="EU351100">
    <property type="protein sequence ID" value="ABY68285.1"/>
    <property type="molecule type" value="Genomic_DNA"/>
</dbReference>
<dbReference type="EMBL" id="EU351113">
    <property type="protein sequence ID" value="ABY68324.1"/>
    <property type="molecule type" value="Genomic_DNA"/>
</dbReference>
<dbReference type="EMBL" id="EU351101">
    <property type="protein sequence ID" value="ABY68288.1"/>
    <property type="molecule type" value="Genomic_DNA"/>
</dbReference>
<dbReference type="EMBL" id="EU351102">
    <property type="protein sequence ID" value="ABY68291.1"/>
    <property type="molecule type" value="Genomic_DNA"/>
</dbReference>
<dbReference type="EMBL" id="EU351103">
    <property type="protein sequence ID" value="ABY68294.1"/>
    <property type="molecule type" value="Genomic_DNA"/>
</dbReference>
<dbReference type="EMBL" id="EU351104">
    <property type="protein sequence ID" value="ABY68297.1"/>
    <property type="molecule type" value="Genomic_DNA"/>
</dbReference>
<dbReference type="EMBL" id="EU351105">
    <property type="protein sequence ID" value="ABY68300.1"/>
    <property type="molecule type" value="Genomic_DNA"/>
</dbReference>
<dbReference type="EMBL" id="EU351106">
    <property type="protein sequence ID" value="ABY68303.1"/>
    <property type="molecule type" value="Genomic_DNA"/>
</dbReference>
<dbReference type="EMBL" id="EU351107">
    <property type="protein sequence ID" value="ABY68306.1"/>
    <property type="molecule type" value="Genomic_DNA"/>
</dbReference>
<dbReference type="EMBL" id="EU351109">
    <property type="protein sequence ID" value="ABY68312.1"/>
    <property type="molecule type" value="Genomic_DNA"/>
</dbReference>
<dbReference type="EMBL" id="EU351110">
    <property type="protein sequence ID" value="ABY68315.1"/>
    <property type="molecule type" value="Genomic_DNA"/>
</dbReference>
<dbReference type="EMBL" id="EU351111">
    <property type="protein sequence ID" value="ABY68318.1"/>
    <property type="molecule type" value="Genomic_DNA"/>
</dbReference>
<dbReference type="EMBL" id="AK226955">
    <property type="protein sequence ID" value="BAE99024.1"/>
    <property type="molecule type" value="mRNA"/>
</dbReference>
<dbReference type="PIR" id="B96695">
    <property type="entry name" value="B96695"/>
</dbReference>
<dbReference type="RefSeq" id="NP_001322748.1">
    <molecule id="A0A1P8AUY4-1"/>
    <property type="nucleotide sequence ID" value="NM_001334273.1"/>
</dbReference>
<dbReference type="RefSeq" id="NP_176883.5">
    <molecule id="A0A1P8AUY4-2"/>
    <property type="nucleotide sequence ID" value="NM_105382.7"/>
</dbReference>
<dbReference type="FunCoup" id="A0A1P8AUY4">
    <property type="interactions" value="3031"/>
</dbReference>
<dbReference type="STRING" id="3702.A0A1P8AUY4"/>
<dbReference type="GlyGen" id="A0A1P8AUY4">
    <property type="glycosylation" value="2 sites"/>
</dbReference>
<dbReference type="iPTMnet" id="A0A1P8AUY4"/>
<dbReference type="PaxDb" id="3702-AT1G67120.1"/>
<dbReference type="ProteomicsDB" id="228841">
    <molecule id="A0A1P8AUY4-1"/>
</dbReference>
<dbReference type="EnsemblPlants" id="AT1G67120.1">
    <molecule id="A0A1P8AUY4-2"/>
    <property type="protein sequence ID" value="AT1G67120.1"/>
    <property type="gene ID" value="AT1G67120"/>
</dbReference>
<dbReference type="EnsemblPlants" id="AT1G67120.2">
    <molecule id="A0A1P8AUY4-1"/>
    <property type="protein sequence ID" value="AT1G67120.2"/>
    <property type="gene ID" value="AT1G67120"/>
</dbReference>
<dbReference type="GeneID" id="843032"/>
<dbReference type="Gramene" id="AT1G67120.1">
    <molecule id="A0A1P8AUY4-2"/>
    <property type="protein sequence ID" value="AT1G67120.1"/>
    <property type="gene ID" value="AT1G67120"/>
</dbReference>
<dbReference type="Gramene" id="AT1G67120.2">
    <molecule id="A0A1P8AUY4-1"/>
    <property type="protein sequence ID" value="AT1G67120.2"/>
    <property type="gene ID" value="AT1G67120"/>
</dbReference>
<dbReference type="KEGG" id="ath:AT1G67120"/>
<dbReference type="Araport" id="AT1G67120"/>
<dbReference type="TAIR" id="AT1G67120">
    <property type="gene designation" value="MDN1"/>
</dbReference>
<dbReference type="eggNOG" id="KOG1808">
    <property type="taxonomic scope" value="Eukaryota"/>
</dbReference>
<dbReference type="InParanoid" id="A0A1P8AUY4"/>
<dbReference type="OMA" id="ILEQWHR"/>
<dbReference type="PRO" id="PR:A0A1P8AUY4"/>
<dbReference type="Proteomes" id="UP000006548">
    <property type="component" value="Chromosome 1"/>
</dbReference>
<dbReference type="ExpressionAtlas" id="A0A1P8AUY4">
    <property type="expression patterns" value="baseline and differential"/>
</dbReference>
<dbReference type="GO" id="GO:0009941">
    <property type="term" value="C:chloroplast envelope"/>
    <property type="evidence" value="ECO:0007005"/>
    <property type="project" value="TAIR"/>
</dbReference>
<dbReference type="GO" id="GO:0005737">
    <property type="term" value="C:cytoplasm"/>
    <property type="evidence" value="ECO:0000314"/>
    <property type="project" value="TAIR"/>
</dbReference>
<dbReference type="GO" id="GO:0005730">
    <property type="term" value="C:nucleolus"/>
    <property type="evidence" value="ECO:0007669"/>
    <property type="project" value="UniProtKB-SubCell"/>
</dbReference>
<dbReference type="GO" id="GO:0005654">
    <property type="term" value="C:nucleoplasm"/>
    <property type="evidence" value="ECO:0007669"/>
    <property type="project" value="UniProtKB-SubCell"/>
</dbReference>
<dbReference type="GO" id="GO:0005634">
    <property type="term" value="C:nucleus"/>
    <property type="evidence" value="ECO:0000314"/>
    <property type="project" value="TAIR"/>
</dbReference>
<dbReference type="GO" id="GO:0009506">
    <property type="term" value="C:plasmodesma"/>
    <property type="evidence" value="ECO:0007005"/>
    <property type="project" value="TAIR"/>
</dbReference>
<dbReference type="GO" id="GO:0005524">
    <property type="term" value="F:ATP binding"/>
    <property type="evidence" value="ECO:0007669"/>
    <property type="project" value="UniProtKB-KW"/>
</dbReference>
<dbReference type="GO" id="GO:0016887">
    <property type="term" value="F:ATP hydrolysis activity"/>
    <property type="evidence" value="ECO:0007669"/>
    <property type="project" value="InterPro"/>
</dbReference>
<dbReference type="GO" id="GO:0009738">
    <property type="term" value="P:abscisic acid-activated signaling pathway"/>
    <property type="evidence" value="ECO:0007669"/>
    <property type="project" value="UniProtKB-KW"/>
</dbReference>
<dbReference type="GO" id="GO:0009553">
    <property type="term" value="P:embryo sac development"/>
    <property type="evidence" value="ECO:0000315"/>
    <property type="project" value="UniProtKB"/>
</dbReference>
<dbReference type="GO" id="GO:0048638">
    <property type="term" value="P:regulation of developmental growth"/>
    <property type="evidence" value="ECO:0000315"/>
    <property type="project" value="UniProtKB"/>
</dbReference>
<dbReference type="GO" id="GO:0000027">
    <property type="term" value="P:ribosomal large subunit assembly"/>
    <property type="evidence" value="ECO:0007669"/>
    <property type="project" value="InterPro"/>
</dbReference>
<dbReference type="GO" id="GO:0000055">
    <property type="term" value="P:ribosomal large subunit export from nucleus"/>
    <property type="evidence" value="ECO:0000315"/>
    <property type="project" value="TAIR"/>
</dbReference>
<dbReference type="CDD" id="cd00009">
    <property type="entry name" value="AAA"/>
    <property type="match status" value="2"/>
</dbReference>
<dbReference type="FunFam" id="3.40.50.300:FF:000142">
    <property type="entry name" value="Midasin"/>
    <property type="match status" value="1"/>
</dbReference>
<dbReference type="FunFam" id="3.40.50.300:FF:000582">
    <property type="entry name" value="Midasin"/>
    <property type="match status" value="1"/>
</dbReference>
<dbReference type="FunFam" id="3.40.50.300:FF:001861">
    <property type="entry name" value="Midasin"/>
    <property type="match status" value="1"/>
</dbReference>
<dbReference type="FunFam" id="3.40.50.300:FF:002238">
    <property type="entry name" value="Midasin"/>
    <property type="match status" value="1"/>
</dbReference>
<dbReference type="FunFam" id="3.40.50.410:FF:000114">
    <property type="entry name" value="Midasin"/>
    <property type="match status" value="1"/>
</dbReference>
<dbReference type="Gene3D" id="3.40.50.300">
    <property type="entry name" value="P-loop containing nucleotide triphosphate hydrolases"/>
    <property type="match status" value="7"/>
</dbReference>
<dbReference type="InterPro" id="IPR003593">
    <property type="entry name" value="AAA+_ATPase"/>
</dbReference>
<dbReference type="InterPro" id="IPR040848">
    <property type="entry name" value="AAA_lid_7"/>
</dbReference>
<dbReference type="InterPro" id="IPR011704">
    <property type="entry name" value="ATPase_dyneun-rel_AAA"/>
</dbReference>
<dbReference type="InterPro" id="IPR048617">
    <property type="entry name" value="MDN1_AAA_lid_4"/>
</dbReference>
<dbReference type="InterPro" id="IPR012099">
    <property type="entry name" value="Midasin"/>
</dbReference>
<dbReference type="InterPro" id="IPR041190">
    <property type="entry name" value="Midasin_AAA_lid_5"/>
</dbReference>
<dbReference type="InterPro" id="IPR027417">
    <property type="entry name" value="P-loop_NTPase"/>
</dbReference>
<dbReference type="InterPro" id="IPR025662">
    <property type="entry name" value="Sigma_54_int_dom_ATP-bd_1"/>
</dbReference>
<dbReference type="InterPro" id="IPR002035">
    <property type="entry name" value="VWF_A"/>
</dbReference>
<dbReference type="InterPro" id="IPR036465">
    <property type="entry name" value="vWFA_dom_sf"/>
</dbReference>
<dbReference type="PANTHER" id="PTHR48103:SF2">
    <property type="entry name" value="MIDASIN"/>
    <property type="match status" value="1"/>
</dbReference>
<dbReference type="PANTHER" id="PTHR48103">
    <property type="entry name" value="MIDASIN-RELATED"/>
    <property type="match status" value="1"/>
</dbReference>
<dbReference type="Pfam" id="PF07728">
    <property type="entry name" value="AAA_5"/>
    <property type="match status" value="6"/>
</dbReference>
<dbReference type="Pfam" id="PF17865">
    <property type="entry name" value="AAA_lid_5"/>
    <property type="match status" value="1"/>
</dbReference>
<dbReference type="Pfam" id="PF17867">
    <property type="entry name" value="AAA_lid_7"/>
    <property type="match status" value="3"/>
</dbReference>
<dbReference type="Pfam" id="PF21108">
    <property type="entry name" value="MDN1_4th"/>
    <property type="match status" value="1"/>
</dbReference>
<dbReference type="PIRSF" id="PIRSF010340">
    <property type="entry name" value="Midasin"/>
    <property type="match status" value="1"/>
</dbReference>
<dbReference type="SMART" id="SM00382">
    <property type="entry name" value="AAA"/>
    <property type="match status" value="6"/>
</dbReference>
<dbReference type="SUPFAM" id="SSF52540">
    <property type="entry name" value="P-loop containing nucleoside triphosphate hydrolases"/>
    <property type="match status" value="6"/>
</dbReference>
<dbReference type="SUPFAM" id="SSF53300">
    <property type="entry name" value="vWA-like"/>
    <property type="match status" value="1"/>
</dbReference>
<dbReference type="PROSITE" id="PS00675">
    <property type="entry name" value="SIGMA54_INTERACT_1"/>
    <property type="match status" value="1"/>
</dbReference>
<dbReference type="PROSITE" id="PS50234">
    <property type="entry name" value="VWFA"/>
    <property type="match status" value="1"/>
</dbReference>
<feature type="chain" id="PRO_0000441781" description="Midasin">
    <location>
        <begin position="1"/>
        <end position="5400"/>
    </location>
</feature>
<feature type="domain" description="VWFA" evidence="4">
    <location>
        <begin position="5186"/>
        <end position="5387"/>
    </location>
</feature>
<feature type="region of interest" description="AAA-ATPase protomer 1" evidence="2">
    <location>
        <begin position="345"/>
        <end position="571"/>
    </location>
</feature>
<feature type="region of interest" description="AAA-ATPase protomer 2" evidence="2">
    <location>
        <begin position="656"/>
        <end position="986"/>
    </location>
</feature>
<feature type="region of interest" description="AAA-ATPase protomer 3" evidence="2">
    <location>
        <begin position="1050"/>
        <end position="1308"/>
    </location>
</feature>
<feature type="region of interest" description="AAA-ATPase protomer 4" evidence="2">
    <location>
        <begin position="1347"/>
        <end position="1652"/>
    </location>
</feature>
<feature type="region of interest" description="AAA-ATPase protomer 5" evidence="2">
    <location>
        <begin position="1769"/>
        <end position="2023"/>
    </location>
</feature>
<feature type="region of interest" description="AAA-ATPase protomer 6" evidence="2">
    <location>
        <begin position="2074"/>
        <end position="2347"/>
    </location>
</feature>
<feature type="region of interest" description="Linker" evidence="1">
    <location>
        <begin position="2435"/>
        <end position="4569"/>
    </location>
</feature>
<feature type="region of interest" description="Disordered" evidence="6">
    <location>
        <begin position="4540"/>
        <end position="4890"/>
    </location>
</feature>
<feature type="region of interest" description="Disordered" evidence="6">
    <location>
        <begin position="4905"/>
        <end position="4929"/>
    </location>
</feature>
<feature type="region of interest" description="Disordered" evidence="6">
    <location>
        <begin position="4990"/>
        <end position="5069"/>
    </location>
</feature>
<feature type="coiled-coil region" evidence="2">
    <location>
        <begin position="2896"/>
        <end position="2916"/>
    </location>
</feature>
<feature type="coiled-coil region" evidence="2">
    <location>
        <begin position="3233"/>
        <end position="3253"/>
    </location>
</feature>
<feature type="coiled-coil region" evidence="2">
    <location>
        <begin position="3896"/>
        <end position="3916"/>
    </location>
</feature>
<feature type="coiled-coil region" evidence="2">
    <location>
        <begin position="5271"/>
        <end position="5291"/>
    </location>
</feature>
<feature type="short sequence motif" description="Nuclear localization signal" evidence="5">
    <location>
        <begin position="5157"/>
        <end position="5164"/>
    </location>
</feature>
<feature type="compositionally biased region" description="Basic and acidic residues" evidence="6">
    <location>
        <begin position="4576"/>
        <end position="4612"/>
    </location>
</feature>
<feature type="compositionally biased region" description="Acidic residues" evidence="6">
    <location>
        <begin position="4613"/>
        <end position="4631"/>
    </location>
</feature>
<feature type="compositionally biased region" description="Basic and acidic residues" evidence="6">
    <location>
        <begin position="4641"/>
        <end position="4652"/>
    </location>
</feature>
<feature type="compositionally biased region" description="Basic and acidic residues" evidence="6">
    <location>
        <begin position="4661"/>
        <end position="4687"/>
    </location>
</feature>
<feature type="compositionally biased region" description="Acidic residues" evidence="6">
    <location>
        <begin position="4688"/>
        <end position="4698"/>
    </location>
</feature>
<feature type="compositionally biased region" description="Acidic residues" evidence="6">
    <location>
        <begin position="4706"/>
        <end position="4721"/>
    </location>
</feature>
<feature type="compositionally biased region" description="Basic and acidic residues" evidence="6">
    <location>
        <begin position="4722"/>
        <end position="4732"/>
    </location>
</feature>
<feature type="compositionally biased region" description="Acidic residues" evidence="6">
    <location>
        <begin position="4740"/>
        <end position="4750"/>
    </location>
</feature>
<feature type="compositionally biased region" description="Basic and acidic residues" evidence="6">
    <location>
        <begin position="4751"/>
        <end position="4762"/>
    </location>
</feature>
<feature type="compositionally biased region" description="Acidic residues" evidence="6">
    <location>
        <begin position="4779"/>
        <end position="4798"/>
    </location>
</feature>
<feature type="compositionally biased region" description="Basic and acidic residues" evidence="6">
    <location>
        <begin position="4799"/>
        <end position="4810"/>
    </location>
</feature>
<feature type="compositionally biased region" description="Acidic residues" evidence="6">
    <location>
        <begin position="4811"/>
        <end position="4822"/>
    </location>
</feature>
<feature type="compositionally biased region" description="Basic and acidic residues" evidence="6">
    <location>
        <begin position="4823"/>
        <end position="4834"/>
    </location>
</feature>
<feature type="compositionally biased region" description="Polar residues" evidence="6">
    <location>
        <begin position="4839"/>
        <end position="4855"/>
    </location>
</feature>
<feature type="compositionally biased region" description="Polar residues" evidence="6">
    <location>
        <begin position="4864"/>
        <end position="4874"/>
    </location>
</feature>
<feature type="compositionally biased region" description="Polar residues" evidence="6">
    <location>
        <begin position="4916"/>
        <end position="4928"/>
    </location>
</feature>
<feature type="compositionally biased region" description="Polar residues" evidence="6">
    <location>
        <begin position="5030"/>
        <end position="5040"/>
    </location>
</feature>
<feature type="binding site" evidence="3">
    <location>
        <begin position="360"/>
        <end position="367"/>
    </location>
    <ligand>
        <name>ATP</name>
        <dbReference type="ChEBI" id="CHEBI:30616"/>
    </ligand>
</feature>
<feature type="binding site" evidence="3">
    <location>
        <begin position="674"/>
        <end position="681"/>
    </location>
    <ligand>
        <name>ATP</name>
        <dbReference type="ChEBI" id="CHEBI:30616"/>
    </ligand>
</feature>
<feature type="binding site" evidence="3">
    <location>
        <begin position="1079"/>
        <end position="1086"/>
    </location>
    <ligand>
        <name>ATP</name>
        <dbReference type="ChEBI" id="CHEBI:30616"/>
    </ligand>
</feature>
<feature type="binding site" evidence="3">
    <location>
        <begin position="1369"/>
        <end position="1376"/>
    </location>
    <ligand>
        <name>ATP</name>
        <dbReference type="ChEBI" id="CHEBI:30616"/>
    </ligand>
</feature>
<feature type="binding site" evidence="3">
    <location>
        <begin position="1786"/>
        <end position="1793"/>
    </location>
    <ligand>
        <name>ATP</name>
        <dbReference type="ChEBI" id="CHEBI:30616"/>
    </ligand>
</feature>
<feature type="binding site" evidence="3">
    <location>
        <begin position="2095"/>
        <end position="2102"/>
    </location>
    <ligand>
        <name>ATP</name>
        <dbReference type="ChEBI" id="CHEBI:30616"/>
    </ligand>
</feature>
<feature type="splice variant" id="VSP_059112" description="In isoform 2.">
    <location>
        <begin position="3197"/>
        <end position="3203"/>
    </location>
</feature>
<feature type="mutagenesis site" description="In dsr1; pleiotropic developmental phenotypes including slow germination, short root, dwarf shoot, and reduced seed set under normal growth conditions. Impaired expression of genes related to plant growth and development." evidence="8">
    <original>E</original>
    <variation>K</variation>
    <location>
        <position position="3845"/>
    </location>
</feature>
<sequence>MAIDGSFNLKLALETFSVRCPKVAAFPCFTSILSKGGEVVDNEEVIHALGDAFLHPEFTVPLVHCFLPIIRNVVDRVVGLLRLVDDLKSSIDYSDDVSSVLDNAMTEGISVIDFYVRRGQRLELHECACLAFSRALHFNTSLLGSILNYFEKAPPPYERILVKDIVSESRMEATDAYLLCLRVSYRFLVIRPEVFSKLWDWSCYLDSMKRLSECPRQQRHFLEKYRDAVWCGIQILSVVLRCSDRLAGCFGFEEEEALSCLLRWEEFCQDIEIEKAGLYIQLPTYTALKSLQQFNTLVPGINKRQSAGLEADEPQMKIRRLDTWDVNSFSEPFEIHSRVKKSFEMVSLAVSQKRPVLLYGPSGSGKSALIRKLADESGNHVVFIHMDDQLDGKTLVGTYVCTDQPGEFRWQPGSLTQAIMNGFWVVLEDIDKAPSDVPLVLSSLLGGSCSFLTSQGEEIRIAETFQLFSTISTPECSVSHIRDAGNSLSPLWRRIVVYPPDRESLQSILGARYPNLGPVAEKLIETFETINSALRPQFSSSTTENSATFSSPSRFSLRDLLKWCERVHGLPSYDGHAVYQEAADIFSASNMSVKNRVAVSEIVASIWNVAVPESQDKPPIQEFSGILKIGRVSLPLGETASHDRSRFVETRTSTRLLEKIARSVEYNEPVLLVGETGTGKTTLVQNLAHWIGQKLTVLNLSQQSDIVDLLGGFKPIDPKLMCTMVYNEFNELARDLKIKDDSKIMKWLQDNFRAKKWHTFLTGLLDIIKGIEGRITERMEGKIGEARSRSGRKRKKPEEELKNCACLRTKVNKIRQQIHSGGMVFTFVEGAFVTALREGHWVLLDEVNLAPPEILGRLIGVLEGVRGSLCLAERGDVMGIPRHLNFRLFACMNPATDAGKRDLPFSFRSRFTEYAVDDDICDDDLEIFVRRFLGGRGSDSKLVANIVWFYKEAKRLSEESLQDGANQKPQYSLRSLYRALEYAIKAEAIGGFQKALYDGFSMFFLSLLDASSAKIVEPIIKRISGENIRSQPLQRYLGELKGSSDKFVGSYVKTKSVIDHLNHLAHAIFIKRYPVLLQGPTSSGKTSLVKYLAAISGNKFVRINNHEQTDIQEYLGSYMTDSSGKLVFHEGALVKAVRGGHWIVLDELNLAPSDVLEALNRLLDDNRELFVPELSETISAHPNFMLFATQNPPTLYGGRKILSRAFRNRFVEIHVDEIPEDELSEILTTKCSIANSHASKMVEVMKDLQRNRQSSKAFAGKHGYITPRDLFRWAYRFRTYDGTSHEELAREGYYILAERLRDDTEKVVVQEVLERHFRVSLAKDDLYNMELPRLDSIQNRKFTWTQSMRRLFFLIDRSYKLREPVLLVGDTGGGKTTICQILSDVKKKRLHILNCHQYTETSDFLGGFFPVRDRSKLITEYENQVKQLELSQALTPFGQDIVICGDISRAEVSIKSVEVALEKYKNGSVIGVAATPQDVDFLEKIRNNMVMLYQKWRAIFVWQDGPLVEAMRAGNIVLVDEISLADDSVLERMNSVLETDRKLSLAEKGGPVLEEVVAHEDFFVLATMNPGGDYGKKELSPALRNRFTEIWVPPITDTEELRSIAFSGLSSLKESNVVDPIINFWEWFNRLHTGRTLTVRDLLSWVAFVNMATESLGPAYAILHGAFLVLLDGLSLGTGFSGRDGQDLREKCFAFLLQQLELFASDTLPLELSRMELYGWGDSKAICEKSKSVRHEGMFGIDPFFISKGDENPEIGGFEFLAPTTHRNVLRVLRAMQLSKPILLEGSPGVGKTSLILALGKYSGHKVVRINLSEQTDMMDLLGSDLPVESDEDMKFAWSDGILLQALKEGSWVLLDELNLAPQSVLEGLNAILDHRAQVFIPELGCTFECPPTFRVFACQNPSTQGGGRKGLPKSFLNRFTKVYVDELVEDDYLFICRSLYPSVPSPLLSKLIALNRQLHDGTMLYRKFGHDGSPWEFNLRDVIRSCQFMQEAIHDLEVESFLNVLYIQRMRTATDRKEVLRIYKAIFDKTPSINPYPRVQLNPAYLVVGTAAIKRNLNQSNIASEQLKLLPEIRQNLEAVAHCVQNKWLCILVGPSSSGKTSVIRILAQLTGYPLNELNLSSATDSSDLLGCFEQYNAFRNFRLVMTRVEHLVDEYNSLLLQSSQEALFSNRSGLVSRWLSYLNKIDSSLVENPLFFLNDSETLSTLEEVVEDLEQVLKEGVLPVSWSKKYLEQISKTILQLQTHEKKQSTKFEWVTGMLIKAIEKGEWVVLKNANLCNPTVLDRINSLVEPCGSITINECGIVNGEPVTVVPHPNFRLFLSVNPKFGEVSRAMRNRGVEVFMMGPHWQLNEDGSNCEELVLRGVERFLALSGIPGYKLVTSMAKAHVHAWLNGQSFGVRITYLELEQWVHLFQLLLMNGNQLLWSLQLSWEHIYLSSLGVTDGKEVVDFVRETYLSDVELSELDSFMGGDLYLPGGWPKPFNLRDLTWYSRETTVRQNCMYLEFLGAQYASHQPKISDNVKSRDRELAAGEPRIIYSIDSWTLKKVLFPKALIGSSCAPDAANFENDLASKMLLFAANWTIEQATEEDIQLYLAWFSWFGSRLQQHCPFLLCFLNTLKVEFEHPIWNHISRCRKNLKFLCRLDPDAVPIPMLSSKLIDVAASNDQSKPYSKSLFESLNSVGVLRRSYQQWLVESNDNHTDVSTFTRFLDSLRVLEKKILCEIVGAPSFSVLIQLYTEVIDNHSFFWSGLVSSSDEYLLFSFWSLIKSIKKMHSFFPGEVQVVLEESKNINNIVLHGHPEKSMLWAYGGHPSLPVSAELFHKQQEFLQLCSTVWPLKSESDEHGNDHLTKAIPFSGPELCLLALEGLCISSYIADEDDVDYVAAVQLDEIYQTFLERLKLEKKRLEDKMGFSEIDNTENITASCCVFCPEIVTTGSGFSSWVKTCFIASSESCSLDVELLAALQHLLVARPTEHQDLVDIRKLLKPALEYSLSSTRPPQTLVAHQKLLWAIDAHASELGVDTKIAGFALEIWYWWHSVLWKNSQIGLMNISDTGNCQILSPSMLIQPVKTATVAQILENVFSVKDYSVQSMKLLSASRYLWKSSQPYQEMPGSLLSIARSLFQQIIYTHQKSFESETFVAIKSVFHAIEKKQNKMDGIQNLISLIGSSSHNKLKSVTHSFVGPLAKRLYSDSSSNALCPTFVEFYCNLGLAWLYLGGLRFHLLNSLDVIDPAMKITCKLLKLEEKISSLELNIKVRGECGYLSGLLYSGNNDESSEHTLSKLKTEHKRLQRKVIFRSDPKKYQDLRRALDEFAGFLTRPISLVNDIEVLDWNQVVEQVFNWQETAISFIDRMSSDYSEYVDITQPIQVSVYEMKLGLSLFVSGALLGKLLNRFDIDMVDSVMETIYALMRFPRDSSIASTTYTECLPPLHLSHGANSRAKSLGLDVGLLHKLISVSSAEDSRKASELQLKVALYKNLHARVLQFVANTGLLDEASFELLDKIYVELARIWMEMKFQAKTKADNLPGLYKFRSRDFKIDSVMEVDISALGKYFPNESFSEWQEYLADDDTKNVKDMTHIDQDEENLEDDWDLIQEHLDSIYSTHNELFGFCDLSEKSGRFCITDSRRLDSFTDSYELGVSMIKGLRGLFTSSLDAKLVPEHLLRLCLENKKNFTSNYQSASKYNFYKDLDGPELGKMVKFLTPLQQRINSLLQEREDHPGLQKLSGVLQMLLAIPSSTPLAKALSGLQFLLCKVHKLQEEGCKLPISDLLEPIISLASSWQKVEFERWPTLLDEVQDQYELNARKLWLPLFSVLFQKDAVEISEHENESISQSLVEFIETSNVGEFRRRLQLLFCFLLQLSMGSSLGIYSSDSHKRRVEMCYNIFGFYIQFLPVVMEQLDLNRKNVETELKEVLKLCRWERPDNYLYNETTKRTRQKVKKLIQKFTDMLRLPVMLVKPDLTKERAQFLPLLDPDLMDGASDMRIEVLVSALDAEQLRDRSSWYVVWWNKLKESVGRFHQEMHYKTLLMGAEHQYSSPVYQGDWKNLWSTVARIGETIAGCSDLWRNSDRDVAKKRALFELLKLLESSGLQKHKFENIEMSNHFKGLLYQPAYDPKHLLLLTHTKSNIHPSMGVEDQNKENSLVEWRVANEFYFKSLASVQLMLNIDRKHSDVTAEQVKRAISFLNHLVEIQRQQRKSAYAFAELFNRFRQCVLSLARLLGDSVGADRKDDSVFSFPQNQHAVFNCLWLQKQLFDNITAMLLEESALLRTVGSTHLDSCQAVKTSSRSLLSFIEILIPIAQNSKASLDRLLLDCNGFIITPSSSLKQFVTQHMVQVLRQNFDQLTDLENQISSFCENNEKSYCRDVLLSQFSPVFKEGKLLAENLNCLLNVRDQSTGMEPKERLFLEENLASIFANVKDVIGKLCSYKDGSLSQEEEMNITTWDGLFKKAENDLNLDNLCKLLSESFGSIEQLLNSSGVLSAGVGDQLKQLQAFLDLLLSFGDCYLKEFLAISKTVSLITHVLASVLADLFTKGFGISKNEEDDDSKVDKSEAAEGTGMGDGVGAKDVSDQIEDEDQLHGTDKKEEEEKEQDDVLGKNKGIEMSDEFDGKEYSVSEDEEEDKEDEGSEDEPLDNGIGDVGSDAEKADEKPWNKDEEDEEENMNEKNESGPSIVDKDTRSRELRAKDDGVETADEPEESNTSDKPEEGNDENVEQDDFDDTDNLEEKIQTKEEALGGLTPDVDNEQIDDDMEMDKTEEVEKEDANQQEEPCSEDQKHPEEGENDQEETQEPSEENMEAEAEDRCGSPQKEEPGNDLEQEPETEPIEGKEVMSEDMMKPNFRNDNISGVESGSQNPHGSNVLGAGSTAPQENLSATDVTDELTDSMDLPSSSNTEMNLMMTNMANGETLTDNLPKMEFPQNQSSTAQQTKVNPYRNVGDALKEWKERVRISSDLGEKQEAENEMEDPDASEYGFASQFDAGTSQALGPALPEQVNTDMREGESEEEKLAGNQDDVSPMDIDDLNPENKPAVQSKPSISNSIAEQVQEPDTDRTHQENSPIHNFGDGNSRMDSMVSVDNTFLGEEACNLDRMQVTDNDSESNQDNQEDPDARSNAVVLWRRCELLTAKPSQELAEQLRLILEPTLASKLSGDYRTGKRINMKKVIPYIASHYRKDKIWLRRTKPNKRDYQVVIAVDDSRSMSESGCGDFAIRALATVCRAMSQLELGSLAVASFGKQGSIKMLHDFGQSFTTESGIKMISNLTFKQENLIEDQPVVNLLRNMNEMLENLASTRRQSYGSNPLQQLVLIIGDGKFHEREKLKRTVRSFLQQKRMVVYLLLDDAEQSVFDLADYVYDGERRPYKKMNYLDSFPFPYYIVLRDIEALPRTLGDVLRQWFELMQSSRD</sequence>
<comment type="function">
    <text evidence="1 7 8">Nuclear chaperone required for maturation and nuclear export of pre-60S ribosome subunits. Functions at successive maturation steps to remove ribosomal factors at critical transition points, first driving the exit of early pre-60S particles from the nucleolus and then driving late pre-60S particles from the nucleus (By similarity). Required for female gametophyte development (PubMed:23572950). Involved in the expression regulation of genes related to plant growth and development (PubMed:27824150).</text>
</comment>
<comment type="subunit">
    <text evidence="1">Associates with pre-60S ribosomes in the nucleoplasm.</text>
</comment>
<comment type="subcellular location">
    <subcellularLocation>
        <location evidence="1">Nucleus</location>
        <location evidence="1">Nucleolus</location>
    </subcellularLocation>
    <subcellularLocation>
        <location evidence="1">Nucleus</location>
        <location evidence="1">Nucleoplasm</location>
    </subcellularLocation>
</comment>
<comment type="alternative products">
    <event type="alternative splicing"/>
    <isoform>
        <id>A0A1P8AUY4-1</id>
        <name>1</name>
        <sequence type="displayed"/>
    </isoform>
    <isoform>
        <id>A0A1P8AUY4-2</id>
        <name>2</name>
        <sequence type="described" ref="VSP_059112"/>
    </isoform>
</comment>
<comment type="tissue specificity">
    <text evidence="7 8">Constitutively and ubiquitously expressed (PubMed:23572950). Mostly observed in the shoot apex and root tip, and, to a lower extent, in mature seeds, seedling (excluding the hypocotyl), roots, stems, leaves and flowers (PubMed:27824150).</text>
</comment>
<comment type="disruption phenotype">
    <text evidence="7">Female semisterility due to strongly delayed development of female gametophyte.</text>
</comment>
<comment type="similarity">
    <text evidence="11">Belongs to the midasin family.</text>
</comment>
<comment type="sequence caution" evidence="11">
    <conflict type="erroneous gene model prediction">
        <sequence resource="EMBL-CDS" id="AAD10657"/>
    </conflict>
</comment>
<accession>A0A1P8AUY4</accession>
<accession>B0FU84</accession>
<accession>F4HRR8</accession>
<accession>Q0WV24</accession>
<accession>Q9ZW94</accession>
<protein>
    <recommendedName>
        <fullName evidence="9">Midasin</fullName>
        <shortName evidence="9">AtMDN1</shortName>
    </recommendedName>
    <alternativeName>
        <fullName>Dynein-related AAA-ATPase MDN1</fullName>
    </alternativeName>
    <alternativeName>
        <fullName evidence="9">MIDAS-containing protein 1</fullName>
    </alternativeName>
    <alternativeName>
        <fullName evidence="10">Protein DWARF AND SHORT ROOT 1</fullName>
    </alternativeName>
</protein>
<gene>
    <name evidence="9" type="primary">MDN1</name>
    <name evidence="10" type="synonym">DSR1</name>
    <name evidence="12" type="ordered locus">At1g67120</name>
    <name evidence="13" type="ORF">F5A8.11</name>
</gene>
<keyword id="KW-0938">Abscisic acid signaling pathway</keyword>
<keyword id="KW-0025">Alternative splicing</keyword>
<keyword id="KW-0067">ATP-binding</keyword>
<keyword id="KW-0143">Chaperone</keyword>
<keyword id="KW-0175">Coiled coil</keyword>
<keyword id="KW-0547">Nucleotide-binding</keyword>
<keyword id="KW-0539">Nucleus</keyword>
<keyword id="KW-1185">Reference proteome</keyword>
<organism>
    <name type="scientific">Arabidopsis thaliana</name>
    <name type="common">Mouse-ear cress</name>
    <dbReference type="NCBI Taxonomy" id="3702"/>
    <lineage>
        <taxon>Eukaryota</taxon>
        <taxon>Viridiplantae</taxon>
        <taxon>Streptophyta</taxon>
        <taxon>Embryophyta</taxon>
        <taxon>Tracheophyta</taxon>
        <taxon>Spermatophyta</taxon>
        <taxon>Magnoliopsida</taxon>
        <taxon>eudicotyledons</taxon>
        <taxon>Gunneridae</taxon>
        <taxon>Pentapetalae</taxon>
        <taxon>rosids</taxon>
        <taxon>malvids</taxon>
        <taxon>Brassicales</taxon>
        <taxon>Brassicaceae</taxon>
        <taxon>Camelineae</taxon>
        <taxon>Arabidopsis</taxon>
    </lineage>
</organism>
<name>MDN1_ARATH</name>